<reference key="1">
    <citation type="journal article" date="1985" name="J. Biol. Chem.">
        <title>Characterization of the rat retinol-binding protein gene and its comparison to the three-dimensional structure of the protein.</title>
        <authorList>
            <person name="Laurent B.C."/>
            <person name="Nilsson M.H.L."/>
            <person name="Bavik C.O."/>
            <person name="Jones T.A."/>
            <person name="Sundelin J."/>
            <person name="Peterson P.A."/>
        </authorList>
    </citation>
    <scope>NUCLEOTIDE SEQUENCE [GENOMIC DNA / MRNA]</scope>
</reference>
<reference key="2">
    <citation type="journal article" date="1985" name="J. Biol. Chem.">
        <title>Amino acid sequence homologies between rabbit, rat, and human serum retinol-binding proteins.</title>
        <authorList>
            <person name="Sundelin J."/>
            <person name="Laurent B.C."/>
            <person name="Anundi H."/>
            <person name="Traegaardh L."/>
            <person name="Larhammar D."/>
            <person name="Bjoerck L."/>
            <person name="Eriksson U."/>
            <person name="Aakerstroem B."/>
            <person name="Jones A."/>
            <person name="Newcomer M."/>
            <person name="Peterson P.A."/>
            <person name="Rask L."/>
        </authorList>
    </citation>
    <scope>PROTEIN SEQUENCE OF 19-59</scope>
    <scope>NUCLEOTIDE SEQUENCE OF 30-201</scope>
</reference>
<reference key="3">
    <citation type="journal article" date="1973" name="J. Biol. Chem.">
        <title>Studies on the transport and cellular distribution of vitamin A in normal and vitamin A-deficient rats with special reference to the vitamin A-binding plasma protein.</title>
        <authorList>
            <person name="Peterson P.A."/>
            <person name="Rask L."/>
            <person name="Ostberg L."/>
            <person name="Andersson L."/>
            <person name="Kamwendo F."/>
            <person name="Pertoft H."/>
        </authorList>
    </citation>
    <scope>FUNCTION</scope>
    <scope>SUBCELLULAR LOCATION</scope>
    <scope>INTERACTION WITH TTR</scope>
    <scope>TISSUE SPECIFICITY</scope>
    <scope>CIRCULAR DICHROISM ANALYSIS</scope>
</reference>
<proteinExistence type="evidence at protein level"/>
<gene>
    <name type="primary">Rbp4</name>
</gene>
<accession>P04916</accession>
<comment type="function">
    <text evidence="1 5">Retinol-binding protein that mediates retinol transport in blood plasma. Delivers retinol from the liver stores to the peripheral tissues (PubMed:4708098). Transfers the bound all-trans retinol to STRA6, that then facilitates retinol transport across the cell membrane (By similarity).</text>
</comment>
<comment type="subunit">
    <text evidence="1 5 7">Interacts with TTR (PubMed:4708098). Interaction with TTR prevents its loss by filtration through the kidney glomeruli (Probable). Interacts with STRA6 (By similarity).</text>
</comment>
<comment type="subcellular location">
    <subcellularLocation>
        <location evidence="5">Secreted</location>
    </subcellularLocation>
</comment>
<comment type="tissue specificity">
    <text evidence="5">Detected in blood plasma (at protein level).</text>
</comment>
<comment type="similarity">
    <text evidence="7">Belongs to the calycin superfamily. Lipocalin family.</text>
</comment>
<keyword id="KW-0903">Direct protein sequencing</keyword>
<keyword id="KW-1015">Disulfide bond</keyword>
<keyword id="KW-0488">Methylation</keyword>
<keyword id="KW-1185">Reference proteome</keyword>
<keyword id="KW-0683">Retinol-binding</keyword>
<keyword id="KW-0964">Secreted</keyword>
<keyword id="KW-0732">Signal</keyword>
<keyword id="KW-0813">Transport</keyword>
<keyword id="KW-0845">Vitamin A</keyword>
<protein>
    <recommendedName>
        <fullName>Retinol-binding protein 4</fullName>
    </recommendedName>
    <alternativeName>
        <fullName>Plasma retinol-binding protein</fullName>
        <shortName>PRBP</shortName>
        <shortName evidence="6">RBP</shortName>
    </alternativeName>
</protein>
<name>RET4_RAT</name>
<organism>
    <name type="scientific">Rattus norvegicus</name>
    <name type="common">Rat</name>
    <dbReference type="NCBI Taxonomy" id="10116"/>
    <lineage>
        <taxon>Eukaryota</taxon>
        <taxon>Metazoa</taxon>
        <taxon>Chordata</taxon>
        <taxon>Craniata</taxon>
        <taxon>Vertebrata</taxon>
        <taxon>Euteleostomi</taxon>
        <taxon>Mammalia</taxon>
        <taxon>Eutheria</taxon>
        <taxon>Euarchontoglires</taxon>
        <taxon>Glires</taxon>
        <taxon>Rodentia</taxon>
        <taxon>Myomorpha</taxon>
        <taxon>Muroidea</taxon>
        <taxon>Muridae</taxon>
        <taxon>Murinae</taxon>
        <taxon>Rattus</taxon>
    </lineage>
</organism>
<evidence type="ECO:0000250" key="1">
    <source>
        <dbReference type="UniProtKB" id="P02753"/>
    </source>
</evidence>
<evidence type="ECO:0000250" key="2">
    <source>
        <dbReference type="UniProtKB" id="P27485"/>
    </source>
</evidence>
<evidence type="ECO:0000250" key="3">
    <source>
        <dbReference type="UniProtKB" id="Q00724"/>
    </source>
</evidence>
<evidence type="ECO:0000269" key="4">
    <source>
    </source>
</evidence>
<evidence type="ECO:0000269" key="5">
    <source>
    </source>
</evidence>
<evidence type="ECO:0000303" key="6">
    <source>
    </source>
</evidence>
<evidence type="ECO:0000305" key="7"/>
<evidence type="ECO:0000305" key="8">
    <source>
    </source>
</evidence>
<sequence>MEWVWALVLLAALGGGSAERDCRVSSFRVKENFDKARFSGLWYAIAKKDPEGLFLQDNIIAEFSVDEKGHMSATAKGRVRLLSNWEVCADMVGTFTDTEDPAKFKMKYWGVASFLQRGNDDHWIIDTDYDTFALQYSCRLQNLDGTCADSYSFVFSRDPNGLTPETRRLVRQRQEELCLERQYRWIEHNGYCQSRPSRNSL</sequence>
<dbReference type="EMBL" id="K03046">
    <property type="protein sequence ID" value="AAA42018.1"/>
    <property type="molecule type" value="Genomic_DNA"/>
</dbReference>
<dbReference type="EMBL" id="M10610">
    <property type="protein sequence ID" value="AAA42018.1"/>
    <property type="status" value="JOINED"/>
    <property type="molecule type" value="Genomic_DNA"/>
</dbReference>
<dbReference type="EMBL" id="M10934">
    <property type="protein sequence ID" value="AAA42020.1"/>
    <property type="molecule type" value="mRNA"/>
</dbReference>
<dbReference type="PIR" id="A92493">
    <property type="entry name" value="VART"/>
</dbReference>
<dbReference type="RefSeq" id="NP_037294.1">
    <property type="nucleotide sequence ID" value="NM_013162.1"/>
</dbReference>
<dbReference type="SMR" id="P04916"/>
<dbReference type="FunCoup" id="P04916">
    <property type="interactions" value="85"/>
</dbReference>
<dbReference type="IntAct" id="P04916">
    <property type="interactions" value="1"/>
</dbReference>
<dbReference type="STRING" id="10116.ENSRNOP00000021055"/>
<dbReference type="PhosphoSitePlus" id="P04916"/>
<dbReference type="PaxDb" id="10116-ENSRNOP00000021055"/>
<dbReference type="Ensembl" id="ENSRNOT00000021055.8">
    <property type="protein sequence ID" value="ENSRNOP00000021055.4"/>
    <property type="gene ID" value="ENSRNOG00000015518.8"/>
</dbReference>
<dbReference type="GeneID" id="25703"/>
<dbReference type="KEGG" id="rno:25703"/>
<dbReference type="UCSC" id="RGD:3546">
    <property type="organism name" value="rat"/>
</dbReference>
<dbReference type="AGR" id="RGD:3546"/>
<dbReference type="CTD" id="5950"/>
<dbReference type="RGD" id="3546">
    <property type="gene designation" value="Rbp4"/>
</dbReference>
<dbReference type="eggNOG" id="ENOG502RXEW">
    <property type="taxonomic scope" value="Eukaryota"/>
</dbReference>
<dbReference type="GeneTree" id="ENSGT00510000047107"/>
<dbReference type="HOGENOM" id="CLU_094618_0_0_1"/>
<dbReference type="InParanoid" id="P04916"/>
<dbReference type="OMA" id="KYWGMAS"/>
<dbReference type="OrthoDB" id="20400at9989"/>
<dbReference type="PhylomeDB" id="P04916"/>
<dbReference type="TreeFam" id="TF331445"/>
<dbReference type="Reactome" id="R-RNO-2453902">
    <property type="pathway name" value="The canonical retinoid cycle in rods (twilight vision)"/>
</dbReference>
<dbReference type="Reactome" id="R-RNO-975634">
    <property type="pathway name" value="Retinoid metabolism and transport"/>
</dbReference>
<dbReference type="PRO" id="PR:P04916"/>
<dbReference type="Proteomes" id="UP000002494">
    <property type="component" value="Chromosome 1"/>
</dbReference>
<dbReference type="Bgee" id="ENSRNOG00000015518">
    <property type="expression patterns" value="Expressed in liver and 20 other cell types or tissues"/>
</dbReference>
<dbReference type="ExpressionAtlas" id="P04916">
    <property type="expression patterns" value="baseline and differential"/>
</dbReference>
<dbReference type="GO" id="GO:0005576">
    <property type="term" value="C:extracellular region"/>
    <property type="evidence" value="ECO:0000266"/>
    <property type="project" value="RGD"/>
</dbReference>
<dbReference type="GO" id="GO:0005615">
    <property type="term" value="C:extracellular space"/>
    <property type="evidence" value="ECO:0000314"/>
    <property type="project" value="UniProtKB"/>
</dbReference>
<dbReference type="GO" id="GO:0032991">
    <property type="term" value="C:protein-containing complex"/>
    <property type="evidence" value="ECO:0000314"/>
    <property type="project" value="RGD"/>
</dbReference>
<dbReference type="GO" id="GO:0044877">
    <property type="term" value="F:protein-containing complex binding"/>
    <property type="evidence" value="ECO:0000314"/>
    <property type="project" value="RGD"/>
</dbReference>
<dbReference type="GO" id="GO:0016918">
    <property type="term" value="F:retinal binding"/>
    <property type="evidence" value="ECO:0007669"/>
    <property type="project" value="UniProtKB-KW"/>
</dbReference>
<dbReference type="GO" id="GO:0019841">
    <property type="term" value="F:retinol binding"/>
    <property type="evidence" value="ECO:0000314"/>
    <property type="project" value="UniProtKB"/>
</dbReference>
<dbReference type="GO" id="GO:0034632">
    <property type="term" value="F:retinol transmembrane transporter activity"/>
    <property type="evidence" value="ECO:0007669"/>
    <property type="project" value="InterPro"/>
</dbReference>
<dbReference type="GO" id="GO:0048738">
    <property type="term" value="P:cardiac muscle tissue development"/>
    <property type="evidence" value="ECO:0000266"/>
    <property type="project" value="RGD"/>
</dbReference>
<dbReference type="GO" id="GO:0050908">
    <property type="term" value="P:detection of light stimulus involved in visual perception"/>
    <property type="evidence" value="ECO:0000266"/>
    <property type="project" value="RGD"/>
</dbReference>
<dbReference type="GO" id="GO:0048562">
    <property type="term" value="P:embryonic organ morphogenesis"/>
    <property type="evidence" value="ECO:0000266"/>
    <property type="project" value="RGD"/>
</dbReference>
<dbReference type="GO" id="GO:0060059">
    <property type="term" value="P:embryonic retina morphogenesis in camera-type eye"/>
    <property type="evidence" value="ECO:0000266"/>
    <property type="project" value="RGD"/>
</dbReference>
<dbReference type="GO" id="GO:0048706">
    <property type="term" value="P:embryonic skeletal system development"/>
    <property type="evidence" value="ECO:0000266"/>
    <property type="project" value="RGD"/>
</dbReference>
<dbReference type="GO" id="GO:0001654">
    <property type="term" value="P:eye development"/>
    <property type="evidence" value="ECO:0000266"/>
    <property type="project" value="RGD"/>
</dbReference>
<dbReference type="GO" id="GO:0048807">
    <property type="term" value="P:female genitalia morphogenesis"/>
    <property type="evidence" value="ECO:0000266"/>
    <property type="project" value="RGD"/>
</dbReference>
<dbReference type="GO" id="GO:0006094">
    <property type="term" value="P:gluconeogenesis"/>
    <property type="evidence" value="ECO:0000266"/>
    <property type="project" value="RGD"/>
</dbReference>
<dbReference type="GO" id="GO:0042593">
    <property type="term" value="P:glucose homeostasis"/>
    <property type="evidence" value="ECO:0000266"/>
    <property type="project" value="RGD"/>
</dbReference>
<dbReference type="GO" id="GO:0007507">
    <property type="term" value="P:heart development"/>
    <property type="evidence" value="ECO:0000266"/>
    <property type="project" value="RGD"/>
</dbReference>
<dbReference type="GO" id="GO:0060347">
    <property type="term" value="P:heart trabecula formation"/>
    <property type="evidence" value="ECO:0000266"/>
    <property type="project" value="RGD"/>
</dbReference>
<dbReference type="GO" id="GO:0030324">
    <property type="term" value="P:lung development"/>
    <property type="evidence" value="ECO:0000266"/>
    <property type="project" value="RGD"/>
</dbReference>
<dbReference type="GO" id="GO:0030277">
    <property type="term" value="P:maintenance of gastrointestinal epithelium"/>
    <property type="evidence" value="ECO:0000266"/>
    <property type="project" value="RGD"/>
</dbReference>
<dbReference type="GO" id="GO:0008584">
    <property type="term" value="P:male gonad development"/>
    <property type="evidence" value="ECO:0000266"/>
    <property type="project" value="RGD"/>
</dbReference>
<dbReference type="GO" id="GO:0060044">
    <property type="term" value="P:negative regulation of cardiac muscle cell proliferation"/>
    <property type="evidence" value="ECO:0000266"/>
    <property type="project" value="RGD"/>
</dbReference>
<dbReference type="GO" id="GO:0007603">
    <property type="term" value="P:phototransduction, visible light"/>
    <property type="evidence" value="ECO:0000266"/>
    <property type="project" value="RGD"/>
</dbReference>
<dbReference type="GO" id="GO:0002639">
    <property type="term" value="P:positive regulation of immunoglobulin production"/>
    <property type="evidence" value="ECO:0000266"/>
    <property type="project" value="RGD"/>
</dbReference>
<dbReference type="GO" id="GO:0032024">
    <property type="term" value="P:positive regulation of insulin secretion"/>
    <property type="evidence" value="ECO:0000266"/>
    <property type="project" value="RGD"/>
</dbReference>
<dbReference type="GO" id="GO:0045471">
    <property type="term" value="P:response to ethanol"/>
    <property type="evidence" value="ECO:0000270"/>
    <property type="project" value="RGD"/>
</dbReference>
<dbReference type="GO" id="GO:0032868">
    <property type="term" value="P:response to insulin"/>
    <property type="evidence" value="ECO:0000266"/>
    <property type="project" value="RGD"/>
</dbReference>
<dbReference type="GO" id="GO:0014850">
    <property type="term" value="P:response to muscle activity"/>
    <property type="evidence" value="ECO:0000270"/>
    <property type="project" value="RGD"/>
</dbReference>
<dbReference type="GO" id="GO:0032526">
    <property type="term" value="P:response to retinoic acid"/>
    <property type="evidence" value="ECO:0000266"/>
    <property type="project" value="RGD"/>
</dbReference>
<dbReference type="GO" id="GO:0009410">
    <property type="term" value="P:response to xenobiotic stimulus"/>
    <property type="evidence" value="ECO:0000270"/>
    <property type="project" value="RGD"/>
</dbReference>
<dbReference type="GO" id="GO:0060041">
    <property type="term" value="P:retina development in camera-type eye"/>
    <property type="evidence" value="ECO:0000266"/>
    <property type="project" value="RGD"/>
</dbReference>
<dbReference type="GO" id="GO:0042574">
    <property type="term" value="P:retinal metabolic process"/>
    <property type="evidence" value="ECO:0000266"/>
    <property type="project" value="RGD"/>
</dbReference>
<dbReference type="GO" id="GO:0001523">
    <property type="term" value="P:retinoid metabolic process"/>
    <property type="evidence" value="ECO:0000266"/>
    <property type="project" value="RGD"/>
</dbReference>
<dbReference type="GO" id="GO:0042572">
    <property type="term" value="P:retinol metabolic process"/>
    <property type="evidence" value="ECO:0000266"/>
    <property type="project" value="RGD"/>
</dbReference>
<dbReference type="GO" id="GO:0034633">
    <property type="term" value="P:retinol transport"/>
    <property type="evidence" value="ECO:0000314"/>
    <property type="project" value="RGD"/>
</dbReference>
<dbReference type="GO" id="GO:0007283">
    <property type="term" value="P:spermatogenesis"/>
    <property type="evidence" value="ECO:0000266"/>
    <property type="project" value="RGD"/>
</dbReference>
<dbReference type="GO" id="GO:0060157">
    <property type="term" value="P:urinary bladder development"/>
    <property type="evidence" value="ECO:0000266"/>
    <property type="project" value="RGD"/>
</dbReference>
<dbReference type="GO" id="GO:0060065">
    <property type="term" value="P:uterus development"/>
    <property type="evidence" value="ECO:0000266"/>
    <property type="project" value="RGD"/>
</dbReference>
<dbReference type="GO" id="GO:0060068">
    <property type="term" value="P:vagina development"/>
    <property type="evidence" value="ECO:0000266"/>
    <property type="project" value="RGD"/>
</dbReference>
<dbReference type="GO" id="GO:0071939">
    <property type="term" value="P:vitamin A import into cell"/>
    <property type="evidence" value="ECO:0000266"/>
    <property type="project" value="RGD"/>
</dbReference>
<dbReference type="CDD" id="cd00743">
    <property type="entry name" value="lipocalin_RBP_like"/>
    <property type="match status" value="1"/>
</dbReference>
<dbReference type="FunFam" id="2.40.128.20:FF:000004">
    <property type="entry name" value="Retinol-binding protein 4"/>
    <property type="match status" value="1"/>
</dbReference>
<dbReference type="Gene3D" id="2.40.128.20">
    <property type="match status" value="1"/>
</dbReference>
<dbReference type="InterPro" id="IPR012674">
    <property type="entry name" value="Calycin"/>
</dbReference>
<dbReference type="InterPro" id="IPR022271">
    <property type="entry name" value="Lipocalin_ApoD"/>
</dbReference>
<dbReference type="InterPro" id="IPR022272">
    <property type="entry name" value="Lipocalin_CS"/>
</dbReference>
<dbReference type="InterPro" id="IPR000566">
    <property type="entry name" value="Lipocln_cytosolic_FA-bd_dom"/>
</dbReference>
<dbReference type="InterPro" id="IPR002449">
    <property type="entry name" value="Retinol-bd/Purpurin"/>
</dbReference>
<dbReference type="PANTHER" id="PTHR11873">
    <property type="entry name" value="RETINOL-BINDING PROTEIN 4"/>
    <property type="match status" value="1"/>
</dbReference>
<dbReference type="PANTHER" id="PTHR11873:SF2">
    <property type="entry name" value="RETINOL-BINDING PROTEIN 4"/>
    <property type="match status" value="1"/>
</dbReference>
<dbReference type="Pfam" id="PF00061">
    <property type="entry name" value="Lipocalin"/>
    <property type="match status" value="1"/>
</dbReference>
<dbReference type="PIRSF" id="PIRSF036893">
    <property type="entry name" value="Lipocalin_ApoD"/>
    <property type="match status" value="1"/>
</dbReference>
<dbReference type="PIRSF" id="PIRSF500204">
    <property type="entry name" value="RBP_purpurin"/>
    <property type="match status" value="1"/>
</dbReference>
<dbReference type="PRINTS" id="PR00179">
    <property type="entry name" value="LIPOCALIN"/>
</dbReference>
<dbReference type="PRINTS" id="PR01174">
    <property type="entry name" value="RETINOLBNDNG"/>
</dbReference>
<dbReference type="SUPFAM" id="SSF50814">
    <property type="entry name" value="Lipocalins"/>
    <property type="match status" value="1"/>
</dbReference>
<dbReference type="PROSITE" id="PS00213">
    <property type="entry name" value="LIPOCALIN"/>
    <property type="match status" value="1"/>
</dbReference>
<feature type="signal peptide" evidence="4">
    <location>
        <begin position="1"/>
        <end position="18"/>
    </location>
</feature>
<feature type="chain" id="PRO_0000017970" description="Retinol-binding protein 4" evidence="1 8">
    <location>
        <begin position="19"/>
        <end position="201"/>
    </location>
</feature>
<feature type="binding site" evidence="2">
    <location>
        <position position="116"/>
    </location>
    <ligand>
        <name>substrate</name>
    </ligand>
</feature>
<feature type="modified residue" description="Omega-N-methylarginine" evidence="3">
    <location>
        <position position="139"/>
    </location>
</feature>
<feature type="disulfide bond" evidence="1">
    <location>
        <begin position="22"/>
        <end position="178"/>
    </location>
</feature>
<feature type="disulfide bond" evidence="1">
    <location>
        <begin position="88"/>
        <end position="192"/>
    </location>
</feature>
<feature type="disulfide bond" evidence="1">
    <location>
        <begin position="138"/>
        <end position="147"/>
    </location>
</feature>